<proteinExistence type="inferred from homology"/>
<sequence length="373" mass="38965">MSMRVGILTSGGDSPGLNAAIRGFGKAAVSTYGMELIGFRDGMRGLAENRFMQLDSHALSGILTTGGTILGTSRDKVHKMLVDGKVQNMIPVIKKNYEKNKLDALVCLGGGGTAKNAKRLSDAGMNVITLPKTIDNDLVGTDQTFGFATALEIATDAVDRLHSTAHSHHRIILTEIMGHRAGWLALGAGIAGGADVILLPEVPYNVESIAAAISRRSAHGSNFSVVAVAEGARNERDAAELAAADALVREADSPVARDAAKTHRANVEASHRAHTFTLATELEKATGLESRVTILGYVQRGGTPCGRDRVLATVLGTAGADLVAKGVFGVMVAAKGDGAEPVPLEEVAGKIRRVPVDHPWIRAAKEVGTGFGD</sequence>
<protein>
    <recommendedName>
        <fullName evidence="1">ATP-dependent 6-phosphofructokinase</fullName>
        <shortName evidence="1">ATP-PFK</shortName>
        <shortName evidence="1">Phosphofructokinase</shortName>
        <ecNumber evidence="1">2.7.1.11</ecNumber>
    </recommendedName>
    <alternativeName>
        <fullName evidence="1">Phosphohexokinase</fullName>
    </alternativeName>
</protein>
<gene>
    <name evidence="1" type="primary">pfkA</name>
    <name type="ordered locus">PFREUD_08290</name>
</gene>
<reference key="1">
    <citation type="journal article" date="2004" name="In Silico Biol.">
        <title>In silico exploration of the fructose-6-phosphate phosphorylation step in glycolysis: genomic evidence of the coexistence of an atypical ATP-dependent along with a PPi-dependent phosphofructokinase in Propionibacterium freudenreichii subsp. shermanii.</title>
        <authorList>
            <person name="Meurice G."/>
            <person name="Deborde C."/>
            <person name="Jacob D."/>
            <person name="Falentin H."/>
            <person name="Boyaval P."/>
            <person name="Dimova D."/>
        </authorList>
    </citation>
    <scope>NUCLEOTIDE SEQUENCE [GENOMIC DNA]</scope>
    <source>
        <strain>ATCC 9614 / DSM 4902 / CIP 103027 / NCIMB 8099 / CIRM-BIA1</strain>
    </source>
</reference>
<reference key="2">
    <citation type="journal article" date="2010" name="PLoS ONE">
        <title>The complete genome of Propionibacterium freudenreichii CIRM-BIA1, a hardy actinobacterium with food and probiotic applications.</title>
        <authorList>
            <person name="Falentin H."/>
            <person name="Deutsch S.M."/>
            <person name="Jan G."/>
            <person name="Loux V."/>
            <person name="Thierry A."/>
            <person name="Parayre S."/>
            <person name="Maillard M.B."/>
            <person name="Dherbecourt J."/>
            <person name="Cousin F.J."/>
            <person name="Jardin J."/>
            <person name="Siguier P."/>
            <person name="Couloux A."/>
            <person name="Barbe V."/>
            <person name="Vacherie B."/>
            <person name="Wincker P."/>
            <person name="Gibrat J.F."/>
            <person name="Gaillardin C."/>
            <person name="Lortal S."/>
        </authorList>
    </citation>
    <scope>NUCLEOTIDE SEQUENCE [LARGE SCALE GENOMIC DNA]</scope>
    <source>
        <strain>ATCC 9614 / DSM 4902 / CIP 103027 / NCIMB 8099 / CIRM-BIA1</strain>
    </source>
</reference>
<comment type="function">
    <text evidence="1">Catalyzes the phosphorylation of D-fructose 6-phosphate to fructose 1,6-bisphosphate by ATP, the first committing step of glycolysis.</text>
</comment>
<comment type="catalytic activity">
    <reaction evidence="1">
        <text>beta-D-fructose 6-phosphate + ATP = beta-D-fructose 1,6-bisphosphate + ADP + H(+)</text>
        <dbReference type="Rhea" id="RHEA:16109"/>
        <dbReference type="ChEBI" id="CHEBI:15378"/>
        <dbReference type="ChEBI" id="CHEBI:30616"/>
        <dbReference type="ChEBI" id="CHEBI:32966"/>
        <dbReference type="ChEBI" id="CHEBI:57634"/>
        <dbReference type="ChEBI" id="CHEBI:456216"/>
        <dbReference type="EC" id="2.7.1.11"/>
    </reaction>
</comment>
<comment type="cofactor">
    <cofactor evidence="1">
        <name>Mg(2+)</name>
        <dbReference type="ChEBI" id="CHEBI:18420"/>
    </cofactor>
</comment>
<comment type="pathway">
    <text evidence="1">Carbohydrate degradation; glycolysis; D-glyceraldehyde 3-phosphate and glycerone phosphate from D-glucose: step 3/4.</text>
</comment>
<comment type="subunit">
    <text evidence="1">Homodimer or homotetramer.</text>
</comment>
<comment type="subcellular location">
    <subcellularLocation>
        <location evidence="1">Cytoplasm</location>
    </subcellularLocation>
</comment>
<comment type="similarity">
    <text evidence="1">Belongs to the phosphofructokinase type A (PFKA) family. Mixed-substrate PFK group III subfamily.</text>
</comment>
<name>PFKA_PROFC</name>
<organism>
    <name type="scientific">Propionibacterium freudenreichii subsp. shermanii (strain ATCC 9614 / DSM 4902 / CIP 103027 / NCIMB 8099 / CIRM-BIA1)</name>
    <dbReference type="NCBI Taxonomy" id="754252"/>
    <lineage>
        <taxon>Bacteria</taxon>
        <taxon>Bacillati</taxon>
        <taxon>Actinomycetota</taxon>
        <taxon>Actinomycetes</taxon>
        <taxon>Propionibacteriales</taxon>
        <taxon>Propionibacteriaceae</taxon>
        <taxon>Propionibacterium</taxon>
    </lineage>
</organism>
<feature type="chain" id="PRO_0000429708" description="ATP-dependent 6-phosphofructokinase">
    <location>
        <begin position="1"/>
        <end position="373"/>
    </location>
</feature>
<feature type="active site" description="Proton acceptor" evidence="1">
    <location>
        <position position="135"/>
    </location>
</feature>
<feature type="binding site" evidence="1">
    <location>
        <position position="12"/>
    </location>
    <ligand>
        <name>ATP</name>
        <dbReference type="ChEBI" id="CHEBI:30616"/>
    </ligand>
</feature>
<feature type="binding site" evidence="1">
    <location>
        <begin position="74"/>
        <end position="75"/>
    </location>
    <ligand>
        <name>ATP</name>
        <dbReference type="ChEBI" id="CHEBI:30616"/>
    </ligand>
</feature>
<feature type="binding site" evidence="1">
    <location>
        <begin position="110"/>
        <end position="113"/>
    </location>
    <ligand>
        <name>ATP</name>
        <dbReference type="ChEBI" id="CHEBI:30616"/>
    </ligand>
</feature>
<feature type="binding site" description="in other chain" evidence="1">
    <location>
        <begin position="133"/>
        <end position="135"/>
    </location>
    <ligand>
        <name>substrate</name>
        <note>ligand shared between dimeric partners</note>
    </ligand>
</feature>
<feature type="binding site" evidence="1">
    <location>
        <position position="170"/>
    </location>
    <ligand>
        <name>substrate</name>
        <note>ligand shared between dimeric partners</note>
    </ligand>
</feature>
<feature type="binding site" description="in other chain" evidence="1">
    <location>
        <begin position="177"/>
        <end position="179"/>
    </location>
    <ligand>
        <name>substrate</name>
        <note>ligand shared between dimeric partners</note>
    </ligand>
</feature>
<feature type="binding site" description="in other chain" evidence="1">
    <location>
        <position position="230"/>
    </location>
    <ligand>
        <name>substrate</name>
        <note>ligand shared between dimeric partners</note>
    </ligand>
</feature>
<feature type="binding site" evidence="1">
    <location>
        <position position="291"/>
    </location>
    <ligand>
        <name>substrate</name>
        <note>ligand shared between dimeric partners</note>
    </ligand>
</feature>
<feature type="binding site" description="in other chain" evidence="1">
    <location>
        <begin position="297"/>
        <end position="300"/>
    </location>
    <ligand>
        <name>substrate</name>
        <note>ligand shared between dimeric partners</note>
    </ligand>
</feature>
<feature type="site" description="Important for substrate specificity; cannot use PPi as phosphoryl donor" evidence="1">
    <location>
        <position position="112"/>
    </location>
</feature>
<keyword id="KW-0067">ATP-binding</keyword>
<keyword id="KW-0963">Cytoplasm</keyword>
<keyword id="KW-0324">Glycolysis</keyword>
<keyword id="KW-0418">Kinase</keyword>
<keyword id="KW-0460">Magnesium</keyword>
<keyword id="KW-0479">Metal-binding</keyword>
<keyword id="KW-0547">Nucleotide-binding</keyword>
<keyword id="KW-1185">Reference proteome</keyword>
<keyword id="KW-0808">Transferase</keyword>
<dbReference type="EC" id="2.7.1.11" evidence="1"/>
<dbReference type="EMBL" id="AJ509827">
    <property type="protein sequence ID" value="CAD49089.1"/>
    <property type="molecule type" value="Genomic_DNA"/>
</dbReference>
<dbReference type="EMBL" id="FN806773">
    <property type="protein sequence ID" value="CBL56356.1"/>
    <property type="molecule type" value="Genomic_DNA"/>
</dbReference>
<dbReference type="RefSeq" id="WP_013160738.1">
    <property type="nucleotide sequence ID" value="NC_014215.1"/>
</dbReference>
<dbReference type="SMR" id="D7GCU5"/>
<dbReference type="STRING" id="754252.PFREUD_08290"/>
<dbReference type="KEGG" id="pfr:PFREUD_08290"/>
<dbReference type="eggNOG" id="COG0205">
    <property type="taxonomic scope" value="Bacteria"/>
</dbReference>
<dbReference type="HOGENOM" id="CLU_020655_0_0_11"/>
<dbReference type="UniPathway" id="UPA00109">
    <property type="reaction ID" value="UER00182"/>
</dbReference>
<dbReference type="Proteomes" id="UP000000936">
    <property type="component" value="Chromosome"/>
</dbReference>
<dbReference type="GO" id="GO:0005945">
    <property type="term" value="C:6-phosphofructokinase complex"/>
    <property type="evidence" value="ECO:0007669"/>
    <property type="project" value="TreeGrafter"/>
</dbReference>
<dbReference type="GO" id="GO:0003872">
    <property type="term" value="F:6-phosphofructokinase activity"/>
    <property type="evidence" value="ECO:0007669"/>
    <property type="project" value="UniProtKB-UniRule"/>
</dbReference>
<dbReference type="GO" id="GO:0016208">
    <property type="term" value="F:AMP binding"/>
    <property type="evidence" value="ECO:0007669"/>
    <property type="project" value="TreeGrafter"/>
</dbReference>
<dbReference type="GO" id="GO:0005524">
    <property type="term" value="F:ATP binding"/>
    <property type="evidence" value="ECO:0007669"/>
    <property type="project" value="UniProtKB-KW"/>
</dbReference>
<dbReference type="GO" id="GO:0047334">
    <property type="term" value="F:diphosphate-fructose-6-phosphate 1-phosphotransferase activity"/>
    <property type="evidence" value="ECO:0007669"/>
    <property type="project" value="InterPro"/>
</dbReference>
<dbReference type="GO" id="GO:0070095">
    <property type="term" value="F:fructose-6-phosphate binding"/>
    <property type="evidence" value="ECO:0007669"/>
    <property type="project" value="TreeGrafter"/>
</dbReference>
<dbReference type="GO" id="GO:0042802">
    <property type="term" value="F:identical protein binding"/>
    <property type="evidence" value="ECO:0007669"/>
    <property type="project" value="TreeGrafter"/>
</dbReference>
<dbReference type="GO" id="GO:0046872">
    <property type="term" value="F:metal ion binding"/>
    <property type="evidence" value="ECO:0007669"/>
    <property type="project" value="UniProtKB-KW"/>
</dbReference>
<dbReference type="GO" id="GO:0048029">
    <property type="term" value="F:monosaccharide binding"/>
    <property type="evidence" value="ECO:0007669"/>
    <property type="project" value="TreeGrafter"/>
</dbReference>
<dbReference type="GO" id="GO:0061621">
    <property type="term" value="P:canonical glycolysis"/>
    <property type="evidence" value="ECO:0007669"/>
    <property type="project" value="TreeGrafter"/>
</dbReference>
<dbReference type="GO" id="GO:0030388">
    <property type="term" value="P:fructose 1,6-bisphosphate metabolic process"/>
    <property type="evidence" value="ECO:0007669"/>
    <property type="project" value="TreeGrafter"/>
</dbReference>
<dbReference type="GO" id="GO:0006002">
    <property type="term" value="P:fructose 6-phosphate metabolic process"/>
    <property type="evidence" value="ECO:0007669"/>
    <property type="project" value="InterPro"/>
</dbReference>
<dbReference type="Gene3D" id="3.40.50.450">
    <property type="match status" value="1"/>
</dbReference>
<dbReference type="Gene3D" id="3.40.50.460">
    <property type="entry name" value="Phosphofructokinase domain"/>
    <property type="match status" value="1"/>
</dbReference>
<dbReference type="HAMAP" id="MF_01976">
    <property type="entry name" value="Phosphofructokinase_III"/>
    <property type="match status" value="1"/>
</dbReference>
<dbReference type="InterPro" id="IPR022953">
    <property type="entry name" value="ATP_PFK"/>
</dbReference>
<dbReference type="InterPro" id="IPR012003">
    <property type="entry name" value="ATP_PFK_prok-type"/>
</dbReference>
<dbReference type="InterPro" id="IPR000023">
    <property type="entry name" value="Phosphofructokinase_dom"/>
</dbReference>
<dbReference type="InterPro" id="IPR012829">
    <property type="entry name" value="Phosphofructokinase_III"/>
</dbReference>
<dbReference type="InterPro" id="IPR035966">
    <property type="entry name" value="PKF_sf"/>
</dbReference>
<dbReference type="NCBIfam" id="NF002872">
    <property type="entry name" value="PRK03202.1"/>
    <property type="match status" value="1"/>
</dbReference>
<dbReference type="PANTHER" id="PTHR13697:SF52">
    <property type="entry name" value="ATP-DEPENDENT 6-PHOSPHOFRUCTOKINASE 3"/>
    <property type="match status" value="1"/>
</dbReference>
<dbReference type="PANTHER" id="PTHR13697">
    <property type="entry name" value="PHOSPHOFRUCTOKINASE"/>
    <property type="match status" value="1"/>
</dbReference>
<dbReference type="Pfam" id="PF00365">
    <property type="entry name" value="PFK"/>
    <property type="match status" value="1"/>
</dbReference>
<dbReference type="PIRSF" id="PIRSF000532">
    <property type="entry name" value="ATP_PFK_prok"/>
    <property type="match status" value="1"/>
</dbReference>
<dbReference type="PRINTS" id="PR00476">
    <property type="entry name" value="PHFRCTKINASE"/>
</dbReference>
<dbReference type="SUPFAM" id="SSF53784">
    <property type="entry name" value="Phosphofructokinase"/>
    <property type="match status" value="1"/>
</dbReference>
<evidence type="ECO:0000255" key="1">
    <source>
        <dbReference type="HAMAP-Rule" id="MF_01976"/>
    </source>
</evidence>
<accession>D7GCU5</accession>
<accession>Q08I83</accession>